<evidence type="ECO:0000255" key="1">
    <source>
        <dbReference type="HAMAP-Rule" id="MF_01959"/>
    </source>
</evidence>
<accession>Q73GI2</accession>
<proteinExistence type="inferred from homology"/>
<protein>
    <recommendedName>
        <fullName evidence="1">Cytochrome c-type biogenesis protein CcmE</fullName>
    </recommendedName>
    <alternativeName>
        <fullName evidence="1">Cytochrome c maturation protein E</fullName>
    </alternativeName>
    <alternativeName>
        <fullName evidence="1">Heme chaperone CcmE</fullName>
    </alternativeName>
</protein>
<gene>
    <name evidence="1" type="primary">ccmE</name>
    <name evidence="1" type="synonym">cycJ</name>
    <name type="ordered locus">WD_0972</name>
</gene>
<dbReference type="EMBL" id="AE017196">
    <property type="protein sequence ID" value="AAS14634.1"/>
    <property type="molecule type" value="Genomic_DNA"/>
</dbReference>
<dbReference type="RefSeq" id="WP_010082373.1">
    <property type="nucleotide sequence ID" value="NZ_OX384529.1"/>
</dbReference>
<dbReference type="SMR" id="Q73GI2"/>
<dbReference type="EnsemblBacteria" id="AAS14634">
    <property type="protein sequence ID" value="AAS14634"/>
    <property type="gene ID" value="WD_0972"/>
</dbReference>
<dbReference type="GeneID" id="70036444"/>
<dbReference type="KEGG" id="wol:WD_0972"/>
<dbReference type="eggNOG" id="COG2332">
    <property type="taxonomic scope" value="Bacteria"/>
</dbReference>
<dbReference type="Proteomes" id="UP000008215">
    <property type="component" value="Chromosome"/>
</dbReference>
<dbReference type="GO" id="GO:0005886">
    <property type="term" value="C:plasma membrane"/>
    <property type="evidence" value="ECO:0007669"/>
    <property type="project" value="UniProtKB-SubCell"/>
</dbReference>
<dbReference type="GO" id="GO:0020037">
    <property type="term" value="F:heme binding"/>
    <property type="evidence" value="ECO:0007669"/>
    <property type="project" value="InterPro"/>
</dbReference>
<dbReference type="GO" id="GO:0046872">
    <property type="term" value="F:metal ion binding"/>
    <property type="evidence" value="ECO:0007669"/>
    <property type="project" value="UniProtKB-KW"/>
</dbReference>
<dbReference type="GO" id="GO:0017004">
    <property type="term" value="P:cytochrome complex assembly"/>
    <property type="evidence" value="ECO:0007669"/>
    <property type="project" value="UniProtKB-KW"/>
</dbReference>
<dbReference type="Gene3D" id="2.40.50.140">
    <property type="entry name" value="Nucleic acid-binding proteins"/>
    <property type="match status" value="1"/>
</dbReference>
<dbReference type="HAMAP" id="MF_01959">
    <property type="entry name" value="CcmE"/>
    <property type="match status" value="1"/>
</dbReference>
<dbReference type="InterPro" id="IPR004329">
    <property type="entry name" value="CcmE"/>
</dbReference>
<dbReference type="InterPro" id="IPR036127">
    <property type="entry name" value="CcmE-like_sf"/>
</dbReference>
<dbReference type="InterPro" id="IPR012340">
    <property type="entry name" value="NA-bd_OB-fold"/>
</dbReference>
<dbReference type="NCBIfam" id="NF009727">
    <property type="entry name" value="PRK13254.1-1"/>
    <property type="match status" value="1"/>
</dbReference>
<dbReference type="PANTHER" id="PTHR34128">
    <property type="entry name" value="CYTOCHROME C-TYPE BIOGENESIS PROTEIN CCME HOMOLOG, MITOCHONDRIAL"/>
    <property type="match status" value="1"/>
</dbReference>
<dbReference type="PANTHER" id="PTHR34128:SF2">
    <property type="entry name" value="CYTOCHROME C-TYPE BIOGENESIS PROTEIN CCME HOMOLOG, MITOCHONDRIAL"/>
    <property type="match status" value="1"/>
</dbReference>
<dbReference type="Pfam" id="PF03100">
    <property type="entry name" value="CcmE"/>
    <property type="match status" value="1"/>
</dbReference>
<dbReference type="SUPFAM" id="SSF82093">
    <property type="entry name" value="Heme chaperone CcmE"/>
    <property type="match status" value="1"/>
</dbReference>
<name>CCME_WOLPM</name>
<organism>
    <name type="scientific">Wolbachia pipientis wMel</name>
    <dbReference type="NCBI Taxonomy" id="163164"/>
    <lineage>
        <taxon>Bacteria</taxon>
        <taxon>Pseudomonadati</taxon>
        <taxon>Pseudomonadota</taxon>
        <taxon>Alphaproteobacteria</taxon>
        <taxon>Rickettsiales</taxon>
        <taxon>Anaplasmataceae</taxon>
        <taxon>Wolbachieae</taxon>
        <taxon>Wolbachia</taxon>
    </lineage>
</organism>
<reference key="1">
    <citation type="journal article" date="2004" name="PLoS Biol.">
        <title>Phylogenomics of the reproductive parasite Wolbachia pipientis wMel: a streamlined genome overrun by mobile genetic elements.</title>
        <authorList>
            <person name="Wu M."/>
            <person name="Sun L.V."/>
            <person name="Vamathevan J.J."/>
            <person name="Riegler M."/>
            <person name="DeBoy R.T."/>
            <person name="Brownlie J.C."/>
            <person name="McGraw E.A."/>
            <person name="Martin W."/>
            <person name="Esser C."/>
            <person name="Ahmadinejad N."/>
            <person name="Wiegand C."/>
            <person name="Madupu R."/>
            <person name="Beanan M.J."/>
            <person name="Brinkac L.M."/>
            <person name="Daugherty S.C."/>
            <person name="Durkin A.S."/>
            <person name="Kolonay J.F."/>
            <person name="Nelson W.C."/>
            <person name="Mohamoud Y."/>
            <person name="Lee P."/>
            <person name="Berry K.J."/>
            <person name="Young M.B."/>
            <person name="Utterback T.R."/>
            <person name="Weidman J.F."/>
            <person name="Nierman W.C."/>
            <person name="Paulsen I.T."/>
            <person name="Nelson K.E."/>
            <person name="Tettelin H."/>
            <person name="O'Neill S.L."/>
            <person name="Eisen J.A."/>
        </authorList>
    </citation>
    <scope>NUCLEOTIDE SEQUENCE [LARGE SCALE GENOMIC DNA]</scope>
</reference>
<comment type="function">
    <text evidence="1">Heme chaperone required for the biogenesis of c-type cytochromes. Transiently binds heme delivered by CcmC and transfers the heme to apo-cytochromes in a process facilitated by CcmF and CcmH.</text>
</comment>
<comment type="subcellular location">
    <subcellularLocation>
        <location evidence="1">Cell membrane</location>
        <topology evidence="1">Single-pass type II membrane protein</topology>
    </subcellularLocation>
</comment>
<comment type="similarity">
    <text evidence="1">Belongs to the CcmE/CycJ family.</text>
</comment>
<keyword id="KW-1003">Cell membrane</keyword>
<keyword id="KW-0201">Cytochrome c-type biogenesis</keyword>
<keyword id="KW-0349">Heme</keyword>
<keyword id="KW-0408">Iron</keyword>
<keyword id="KW-0472">Membrane</keyword>
<keyword id="KW-0479">Metal-binding</keyword>
<keyword id="KW-0735">Signal-anchor</keyword>
<keyword id="KW-0812">Transmembrane</keyword>
<keyword id="KW-1133">Transmembrane helix</keyword>
<feature type="chain" id="PRO_0000238877" description="Cytochrome c-type biogenesis protein CcmE">
    <location>
        <begin position="1"/>
        <end position="130"/>
    </location>
</feature>
<feature type="topological domain" description="Cytoplasmic" evidence="1">
    <location>
        <begin position="1"/>
        <end position="7"/>
    </location>
</feature>
<feature type="transmembrane region" description="Helical; Signal-anchor for type II membrane protein" evidence="1">
    <location>
        <begin position="8"/>
        <end position="28"/>
    </location>
</feature>
<feature type="topological domain" description="Extracellular" evidence="1">
    <location>
        <begin position="29"/>
        <end position="130"/>
    </location>
</feature>
<feature type="binding site" description="covalent" evidence="1">
    <location>
        <position position="120"/>
    </location>
    <ligand>
        <name>heme</name>
        <dbReference type="ChEBI" id="CHEBI:30413"/>
    </ligand>
</feature>
<feature type="binding site" description="axial binding residue" evidence="1">
    <location>
        <position position="124"/>
    </location>
    <ligand>
        <name>heme</name>
        <dbReference type="ChEBI" id="CHEBI:30413"/>
    </ligand>
    <ligandPart>
        <name>Fe</name>
        <dbReference type="ChEBI" id="CHEBI:18248"/>
    </ligandPart>
</feature>
<sequence length="130" mass="14770">MKKKHKRLLITSGIFCFLSCAVFFILTTLKENISFFYTVSEAIVLPNGQKLIRVGGMVVENSVIRNESEVIFQMTDFNKSVMVKYQGILPPMFSEKSGVVVQGKMFDNSTFLADTVFAKHDENYMPKVLK</sequence>